<reference key="1">
    <citation type="submission" date="2006-08" db="EMBL/GenBank/DDBJ databases">
        <title>Complete sequence of chromosome 1 of Burkholderia cepacia AMMD.</title>
        <authorList>
            <person name="Copeland A."/>
            <person name="Lucas S."/>
            <person name="Lapidus A."/>
            <person name="Barry K."/>
            <person name="Detter J.C."/>
            <person name="Glavina del Rio T."/>
            <person name="Hammon N."/>
            <person name="Israni S."/>
            <person name="Pitluck S."/>
            <person name="Bruce D."/>
            <person name="Chain P."/>
            <person name="Malfatti S."/>
            <person name="Shin M."/>
            <person name="Vergez L."/>
            <person name="Schmutz J."/>
            <person name="Larimer F."/>
            <person name="Land M."/>
            <person name="Hauser L."/>
            <person name="Kyrpides N."/>
            <person name="Kim E."/>
            <person name="Parke J."/>
            <person name="Coenye T."/>
            <person name="Konstantinidis K."/>
            <person name="Ramette A."/>
            <person name="Tiedje J."/>
            <person name="Richardson P."/>
        </authorList>
    </citation>
    <scope>NUCLEOTIDE SEQUENCE [LARGE SCALE GENOMIC DNA]</scope>
    <source>
        <strain>ATCC BAA-244 / DSM 16087 / CCUG 44356 / LMG 19182 / AMMD</strain>
    </source>
</reference>
<keyword id="KW-0028">Amino-acid biosynthesis</keyword>
<keyword id="KW-0963">Cytoplasm</keyword>
<keyword id="KW-0368">Histidine biosynthesis</keyword>
<keyword id="KW-0456">Lyase</keyword>
<organism>
    <name type="scientific">Burkholderia ambifaria (strain ATCC BAA-244 / DSM 16087 / CCUG 44356 / LMG 19182 / AMMD)</name>
    <name type="common">Burkholderia cepacia (strain AMMD)</name>
    <dbReference type="NCBI Taxonomy" id="339670"/>
    <lineage>
        <taxon>Bacteria</taxon>
        <taxon>Pseudomonadati</taxon>
        <taxon>Pseudomonadota</taxon>
        <taxon>Betaproteobacteria</taxon>
        <taxon>Burkholderiales</taxon>
        <taxon>Burkholderiaceae</taxon>
        <taxon>Burkholderia</taxon>
        <taxon>Burkholderia cepacia complex</taxon>
    </lineage>
</organism>
<accession>Q0BIW8</accession>
<sequence>MRVAEVVRNTSETQIRVKLDLDGTGRQKLATGVPFLDHMLDQIARHGLIDLEVEAHGDTHIDDHHTVEDVGITLGQAVAKAIGDKKGIRRYGHSYVPLDEALSRVVIDFSGRPGLEFHVPFTRARIGTFDVDLSIEFFRGFVNHAGVTLHIDNLRGINAHHQLETVFKAFGRALRAAVELDERAAGQIPSTKGSL</sequence>
<protein>
    <recommendedName>
        <fullName evidence="1">Imidazoleglycerol-phosphate dehydratase</fullName>
        <shortName evidence="1">IGPD</shortName>
        <ecNumber evidence="1">4.2.1.19</ecNumber>
    </recommendedName>
</protein>
<feature type="chain" id="PRO_1000010254" description="Imidazoleglycerol-phosphate dehydratase">
    <location>
        <begin position="1"/>
        <end position="195"/>
    </location>
</feature>
<comment type="catalytic activity">
    <reaction evidence="1">
        <text>D-erythro-1-(imidazol-4-yl)glycerol 3-phosphate = 3-(imidazol-4-yl)-2-oxopropyl phosphate + H2O</text>
        <dbReference type="Rhea" id="RHEA:11040"/>
        <dbReference type="ChEBI" id="CHEBI:15377"/>
        <dbReference type="ChEBI" id="CHEBI:57766"/>
        <dbReference type="ChEBI" id="CHEBI:58278"/>
        <dbReference type="EC" id="4.2.1.19"/>
    </reaction>
</comment>
<comment type="pathway">
    <text evidence="1">Amino-acid biosynthesis; L-histidine biosynthesis; L-histidine from 5-phospho-alpha-D-ribose 1-diphosphate: step 6/9.</text>
</comment>
<comment type="subcellular location">
    <subcellularLocation>
        <location evidence="1">Cytoplasm</location>
    </subcellularLocation>
</comment>
<comment type="similarity">
    <text evidence="1">Belongs to the imidazoleglycerol-phosphate dehydratase family.</text>
</comment>
<proteinExistence type="inferred from homology"/>
<dbReference type="EC" id="4.2.1.19" evidence="1"/>
<dbReference type="EMBL" id="CP000440">
    <property type="protein sequence ID" value="ABI85905.1"/>
    <property type="molecule type" value="Genomic_DNA"/>
</dbReference>
<dbReference type="RefSeq" id="WP_006751804.1">
    <property type="nucleotide sequence ID" value="NZ_CP009798.1"/>
</dbReference>
<dbReference type="SMR" id="Q0BIW8"/>
<dbReference type="GeneID" id="93084241"/>
<dbReference type="KEGG" id="bam:Bamb_0345"/>
<dbReference type="PATRIC" id="fig|339670.21.peg.1273"/>
<dbReference type="eggNOG" id="COG0131">
    <property type="taxonomic scope" value="Bacteria"/>
</dbReference>
<dbReference type="UniPathway" id="UPA00031">
    <property type="reaction ID" value="UER00011"/>
</dbReference>
<dbReference type="Proteomes" id="UP000000662">
    <property type="component" value="Chromosome 1"/>
</dbReference>
<dbReference type="GO" id="GO:0005737">
    <property type="term" value="C:cytoplasm"/>
    <property type="evidence" value="ECO:0007669"/>
    <property type="project" value="UniProtKB-SubCell"/>
</dbReference>
<dbReference type="GO" id="GO:0004424">
    <property type="term" value="F:imidazoleglycerol-phosphate dehydratase activity"/>
    <property type="evidence" value="ECO:0007669"/>
    <property type="project" value="UniProtKB-UniRule"/>
</dbReference>
<dbReference type="GO" id="GO:0000105">
    <property type="term" value="P:L-histidine biosynthetic process"/>
    <property type="evidence" value="ECO:0007669"/>
    <property type="project" value="UniProtKB-UniRule"/>
</dbReference>
<dbReference type="CDD" id="cd07914">
    <property type="entry name" value="IGPD"/>
    <property type="match status" value="1"/>
</dbReference>
<dbReference type="FunFam" id="3.30.230.40:FF:000002">
    <property type="entry name" value="Imidazoleglycerol-phosphate dehydratase"/>
    <property type="match status" value="1"/>
</dbReference>
<dbReference type="FunFam" id="3.30.230.40:FF:000003">
    <property type="entry name" value="Imidazoleglycerol-phosphate dehydratase HisB"/>
    <property type="match status" value="1"/>
</dbReference>
<dbReference type="Gene3D" id="3.30.230.40">
    <property type="entry name" value="Imidazole glycerol phosphate dehydratase, domain 1"/>
    <property type="match status" value="2"/>
</dbReference>
<dbReference type="HAMAP" id="MF_00076">
    <property type="entry name" value="HisB"/>
    <property type="match status" value="1"/>
</dbReference>
<dbReference type="InterPro" id="IPR038494">
    <property type="entry name" value="IGPD_sf"/>
</dbReference>
<dbReference type="InterPro" id="IPR000807">
    <property type="entry name" value="ImidazoleglycerolP_deHydtase"/>
</dbReference>
<dbReference type="InterPro" id="IPR020565">
    <property type="entry name" value="ImidazoleglycerP_deHydtase_CS"/>
</dbReference>
<dbReference type="InterPro" id="IPR020568">
    <property type="entry name" value="Ribosomal_Su5_D2-typ_SF"/>
</dbReference>
<dbReference type="NCBIfam" id="NF002106">
    <property type="entry name" value="PRK00951.1-1"/>
    <property type="match status" value="1"/>
</dbReference>
<dbReference type="NCBIfam" id="NF002109">
    <property type="entry name" value="PRK00951.1-5"/>
    <property type="match status" value="1"/>
</dbReference>
<dbReference type="NCBIfam" id="NF002111">
    <property type="entry name" value="PRK00951.2-1"/>
    <property type="match status" value="1"/>
</dbReference>
<dbReference type="NCBIfam" id="NF002114">
    <property type="entry name" value="PRK00951.2-4"/>
    <property type="match status" value="1"/>
</dbReference>
<dbReference type="PANTHER" id="PTHR23133:SF2">
    <property type="entry name" value="IMIDAZOLEGLYCEROL-PHOSPHATE DEHYDRATASE"/>
    <property type="match status" value="1"/>
</dbReference>
<dbReference type="PANTHER" id="PTHR23133">
    <property type="entry name" value="IMIDAZOLEGLYCEROL-PHOSPHATE DEHYDRATASE HIS7"/>
    <property type="match status" value="1"/>
</dbReference>
<dbReference type="Pfam" id="PF00475">
    <property type="entry name" value="IGPD"/>
    <property type="match status" value="1"/>
</dbReference>
<dbReference type="SUPFAM" id="SSF54211">
    <property type="entry name" value="Ribosomal protein S5 domain 2-like"/>
    <property type="match status" value="2"/>
</dbReference>
<dbReference type="PROSITE" id="PS00954">
    <property type="entry name" value="IGP_DEHYDRATASE_1"/>
    <property type="match status" value="1"/>
</dbReference>
<dbReference type="PROSITE" id="PS00955">
    <property type="entry name" value="IGP_DEHYDRATASE_2"/>
    <property type="match status" value="1"/>
</dbReference>
<gene>
    <name evidence="1" type="primary">hisB</name>
    <name type="ordered locus">Bamb_0345</name>
</gene>
<evidence type="ECO:0000255" key="1">
    <source>
        <dbReference type="HAMAP-Rule" id="MF_00076"/>
    </source>
</evidence>
<name>HIS7_BURCM</name>